<proteinExistence type="inferred from homology"/>
<organism>
    <name type="scientific">Human papillomavirus type 41</name>
    <dbReference type="NCBI Taxonomy" id="10589"/>
    <lineage>
        <taxon>Viruses</taxon>
        <taxon>Monodnaviria</taxon>
        <taxon>Shotokuvirae</taxon>
        <taxon>Cossaviricota</taxon>
        <taxon>Papovaviricetes</taxon>
        <taxon>Zurhausenvirales</taxon>
        <taxon>Papillomaviridae</taxon>
        <taxon>Firstpapillomavirinae</taxon>
        <taxon>Nupapillomavirus</taxon>
        <taxon>Nupapillomavirus 1</taxon>
    </lineage>
</organism>
<comment type="function">
    <text evidence="1">Forms an icosahedral capsid with a T=7 symmetry and a 50 nm diameter. The capsid is composed of 72 pentamers linked to each other by disulfide bonds and associated with L2 proteins. Binds to heparan sulfate proteoglycans on cell surface of basal layer keratinocytes to provide initial virion attachment. This binding mediates a conformational change in the virus capsid that facilitates efficient infection. The virion enters the host cell via endocytosis. During virus trafficking, L1 protein dissociates from the viral DNA and the genomic DNA is released to the host nucleus. The virion assembly takes place within the cell nucleus. Encapsulates the genomic DNA together with protein L2.</text>
</comment>
<comment type="subunit">
    <text evidence="1">Self-assembles into homopentamers. The capsid has an icosahedral symmetry and consists of 72 capsomers, with each capsomer being a pentamer of L1. Interacts with the minor capsid protein L2; this interaction is necessary for viral genome encapsidation. Interacts with protein E2; this interaction enhances E2-dependent replication and transcription activation.</text>
</comment>
<comment type="subcellular location">
    <subcellularLocation>
        <location evidence="1">Virion</location>
    </subcellularLocation>
    <subcellularLocation>
        <location evidence="1">Host nucleus</location>
    </subcellularLocation>
</comment>
<comment type="similarity">
    <text evidence="1">Belongs to the papillomaviridae L1 protein family.</text>
</comment>
<comment type="sequence caution" evidence="3">
    <conflict type="erroneous initiation">
        <sequence resource="EMBL-CDS" id="CAA39619"/>
    </conflict>
</comment>
<name>VL1_HPV41</name>
<accession>P27557</accession>
<feature type="chain" id="PRO_0000133525" description="Major capsid protein L1">
    <location>
        <begin position="1"/>
        <end position="534"/>
    </location>
</feature>
<feature type="region of interest" description="Disordered" evidence="2">
    <location>
        <begin position="507"/>
        <end position="534"/>
    </location>
</feature>
<feature type="compositionally biased region" description="Polar residues" evidence="2">
    <location>
        <begin position="507"/>
        <end position="521"/>
    </location>
</feature>
<feature type="disulfide bond" description="Interchain (with C-459)" evidence="1">
    <location>
        <position position="200"/>
    </location>
</feature>
<feature type="disulfide bond" description="Interchain (with C-200)" evidence="1">
    <location>
        <position position="459"/>
    </location>
</feature>
<evidence type="ECO:0000255" key="1">
    <source>
        <dbReference type="HAMAP-Rule" id="MF_04002"/>
    </source>
</evidence>
<evidence type="ECO:0000256" key="2">
    <source>
        <dbReference type="SAM" id="MobiDB-lite"/>
    </source>
</evidence>
<evidence type="ECO:0000305" key="3"/>
<sequence>MIYILACCAGNVKNANVFIFQMAVWLPGPNRFYLPPQPIQRTLNTEEYVRRTSTFLHAATDRLLTVGHPFYNITNADGKEVVPKVSSNQFRAFRVRFPNPNTFAFCDKSLFNPDKERLVWGIRGIEVSRGQPLGIGVTGNPFFNKFDDAENPYNGINKNNITDQGSDSRLSIAFDPKQTQLLIVGAKPAKGEYWDVAATCENPPLTKADDKCPALELKSSYIEDADMSDIGLGNLNFSTLQRNKSDAPLDIVDSICKYPDYLQMIEELYGDHMFFYVRREALYARHIMQHAGKMDAEQFPTSLYIDSSVEGEKLNSLQRTDRYFMTPSGSLVATEQQLFNRPFWLQRSQGHNNGILWHNEAFVTLVDTTRGTNFTISVPEGDASSYNNSKFFEFLRHTEEFQLAFILQLCKVDLTPENLAYIHTMDPSIIEDWHLAVTSPPNSVLEDHYRYILSIATKCPSKDADDTSTDPYKDLKFWEVDLRDRMTEQLDQTPLGRKFLFQTGITQSSSNKRVSTQSTALTTYRRPTKRRRKA</sequence>
<gene>
    <name evidence="1" type="primary">L1</name>
</gene>
<reference key="1">
    <citation type="journal article" date="1991" name="Virus Res.">
        <title>Nucleotide sequence of human papillomavirus (HPV) type 41: an unusual HPV type without a typical E2 binding site consensus sequence.</title>
        <authorList>
            <person name="Hirt L."/>
            <person name="Hirsch-Behnam A."/>
            <person name="de Villiers E.M."/>
        </authorList>
    </citation>
    <scope>NUCLEOTIDE SEQUENCE [GENOMIC DNA]</scope>
</reference>
<protein>
    <recommendedName>
        <fullName evidence="1">Major capsid protein L1</fullName>
    </recommendedName>
</protein>
<organismHost>
    <name type="scientific">Homo sapiens</name>
    <name type="common">Human</name>
    <dbReference type="NCBI Taxonomy" id="9606"/>
</organismHost>
<keyword id="KW-0167">Capsid protein</keyword>
<keyword id="KW-1015">Disulfide bond</keyword>
<keyword id="KW-1048">Host nucleus</keyword>
<keyword id="KW-0945">Host-virus interaction</keyword>
<keyword id="KW-0426">Late protein</keyword>
<keyword id="KW-1185">Reference proteome</keyword>
<keyword id="KW-1145">T=7 icosahedral capsid protein</keyword>
<keyword id="KW-1161">Viral attachment to host cell</keyword>
<keyword id="KW-1162">Viral penetration into host cytoplasm</keyword>
<keyword id="KW-0946">Virion</keyword>
<keyword id="KW-1164">Virus endocytosis by host</keyword>
<keyword id="KW-1160">Virus entry into host cell</keyword>
<dbReference type="EMBL" id="X56147">
    <property type="protein sequence ID" value="CAA39619.1"/>
    <property type="status" value="ALT_INIT"/>
    <property type="molecule type" value="Genomic_DNA"/>
</dbReference>
<dbReference type="PIR" id="H43550">
    <property type="entry name" value="P1WL41"/>
</dbReference>
<dbReference type="SMR" id="P27557"/>
<dbReference type="KEGG" id="vg:1489283"/>
<dbReference type="OrthoDB" id="5037at10239"/>
<dbReference type="Proteomes" id="UP000006367">
    <property type="component" value="Genome"/>
</dbReference>
<dbReference type="GO" id="GO:0042025">
    <property type="term" value="C:host cell nucleus"/>
    <property type="evidence" value="ECO:0007669"/>
    <property type="project" value="UniProtKB-SubCell"/>
</dbReference>
<dbReference type="GO" id="GO:0039620">
    <property type="term" value="C:T=7 icosahedral viral capsid"/>
    <property type="evidence" value="ECO:0007669"/>
    <property type="project" value="UniProtKB-UniRule"/>
</dbReference>
<dbReference type="GO" id="GO:0005198">
    <property type="term" value="F:structural molecule activity"/>
    <property type="evidence" value="ECO:0007669"/>
    <property type="project" value="UniProtKB-UniRule"/>
</dbReference>
<dbReference type="GO" id="GO:0075509">
    <property type="term" value="P:endocytosis involved in viral entry into host cell"/>
    <property type="evidence" value="ECO:0007669"/>
    <property type="project" value="UniProtKB-KW"/>
</dbReference>
<dbReference type="GO" id="GO:0019062">
    <property type="term" value="P:virion attachment to host cell"/>
    <property type="evidence" value="ECO:0007669"/>
    <property type="project" value="UniProtKB-UniRule"/>
</dbReference>
<dbReference type="Gene3D" id="2.60.175.20">
    <property type="entry name" value="Major capsid L1 (late) superfamily, Papillomavirus"/>
    <property type="match status" value="2"/>
</dbReference>
<dbReference type="HAMAP" id="MF_04002">
    <property type="entry name" value="PPV_L1"/>
    <property type="match status" value="1"/>
</dbReference>
<dbReference type="InterPro" id="IPR002210">
    <property type="entry name" value="Capsid_L1_Papillomavir"/>
</dbReference>
<dbReference type="InterPro" id="IPR036973">
    <property type="entry name" value="Capsid_L1_sf_Papillomavir"/>
</dbReference>
<dbReference type="InterPro" id="IPR011222">
    <property type="entry name" value="dsDNA_vir_gr_I_capsid"/>
</dbReference>
<dbReference type="Pfam" id="PF00500">
    <property type="entry name" value="Late_protein_L1"/>
    <property type="match status" value="1"/>
</dbReference>
<dbReference type="PRINTS" id="PR00865">
    <property type="entry name" value="HPVCAPSIDL1"/>
</dbReference>
<dbReference type="SUPFAM" id="SSF88648">
    <property type="entry name" value="Group I dsDNA viruses"/>
    <property type="match status" value="1"/>
</dbReference>